<organism>
    <name type="scientific">Pasteurella multocida (strain Pm70)</name>
    <dbReference type="NCBI Taxonomy" id="272843"/>
    <lineage>
        <taxon>Bacteria</taxon>
        <taxon>Pseudomonadati</taxon>
        <taxon>Pseudomonadota</taxon>
        <taxon>Gammaproteobacteria</taxon>
        <taxon>Pasteurellales</taxon>
        <taxon>Pasteurellaceae</taxon>
        <taxon>Pasteurella</taxon>
    </lineage>
</organism>
<comment type="subunit">
    <text evidence="1">Homotetramer.</text>
</comment>
<dbReference type="EMBL" id="AE004439">
    <property type="protein sequence ID" value="AAK04034.1"/>
    <property type="molecule type" value="Genomic_DNA"/>
</dbReference>
<dbReference type="RefSeq" id="WP_010907419.1">
    <property type="nucleotide sequence ID" value="NC_002663.1"/>
</dbReference>
<dbReference type="SMR" id="Q9CJP4"/>
<dbReference type="STRING" id="272843.PM1950"/>
<dbReference type="EnsemblBacteria" id="AAK04034">
    <property type="protein sequence ID" value="AAK04034"/>
    <property type="gene ID" value="PM1950"/>
</dbReference>
<dbReference type="KEGG" id="pmu:PM1950"/>
<dbReference type="PATRIC" id="fig|272843.6.peg.1974"/>
<dbReference type="HOGENOM" id="CLU_078758_0_2_6"/>
<dbReference type="OrthoDB" id="9809878at2"/>
<dbReference type="Proteomes" id="UP000000809">
    <property type="component" value="Chromosome"/>
</dbReference>
<dbReference type="GO" id="GO:0009295">
    <property type="term" value="C:nucleoid"/>
    <property type="evidence" value="ECO:0007669"/>
    <property type="project" value="TreeGrafter"/>
</dbReference>
<dbReference type="GO" id="GO:0003697">
    <property type="term" value="F:single-stranded DNA binding"/>
    <property type="evidence" value="ECO:0007669"/>
    <property type="project" value="UniProtKB-UniRule"/>
</dbReference>
<dbReference type="GO" id="GO:0006260">
    <property type="term" value="P:DNA replication"/>
    <property type="evidence" value="ECO:0007669"/>
    <property type="project" value="InterPro"/>
</dbReference>
<dbReference type="CDD" id="cd04496">
    <property type="entry name" value="SSB_OBF"/>
    <property type="match status" value="1"/>
</dbReference>
<dbReference type="Gene3D" id="2.40.50.140">
    <property type="entry name" value="Nucleic acid-binding proteins"/>
    <property type="match status" value="1"/>
</dbReference>
<dbReference type="HAMAP" id="MF_00984">
    <property type="entry name" value="SSB"/>
    <property type="match status" value="1"/>
</dbReference>
<dbReference type="InterPro" id="IPR012340">
    <property type="entry name" value="NA-bd_OB-fold"/>
</dbReference>
<dbReference type="InterPro" id="IPR000424">
    <property type="entry name" value="Primosome_PriB/ssb"/>
</dbReference>
<dbReference type="InterPro" id="IPR011344">
    <property type="entry name" value="ssDNA-bd"/>
</dbReference>
<dbReference type="NCBIfam" id="TIGR00621">
    <property type="entry name" value="ssb"/>
    <property type="match status" value="1"/>
</dbReference>
<dbReference type="PANTHER" id="PTHR10302">
    <property type="entry name" value="SINGLE-STRANDED DNA-BINDING PROTEIN"/>
    <property type="match status" value="1"/>
</dbReference>
<dbReference type="PANTHER" id="PTHR10302:SF27">
    <property type="entry name" value="SINGLE-STRANDED DNA-BINDING PROTEIN"/>
    <property type="match status" value="1"/>
</dbReference>
<dbReference type="Pfam" id="PF00436">
    <property type="entry name" value="SSB"/>
    <property type="match status" value="1"/>
</dbReference>
<dbReference type="PIRSF" id="PIRSF002070">
    <property type="entry name" value="SSB"/>
    <property type="match status" value="1"/>
</dbReference>
<dbReference type="SUPFAM" id="SSF50249">
    <property type="entry name" value="Nucleic acid-binding proteins"/>
    <property type="match status" value="1"/>
</dbReference>
<dbReference type="PROSITE" id="PS50935">
    <property type="entry name" value="SSB"/>
    <property type="match status" value="1"/>
</dbReference>
<proteinExistence type="inferred from homology"/>
<reference key="1">
    <citation type="journal article" date="2001" name="Proc. Natl. Acad. Sci. U.S.A.">
        <title>Complete genomic sequence of Pasteurella multocida Pm70.</title>
        <authorList>
            <person name="May B.J."/>
            <person name="Zhang Q."/>
            <person name="Li L.L."/>
            <person name="Paustian M.L."/>
            <person name="Whittam T.S."/>
            <person name="Kapur V."/>
        </authorList>
    </citation>
    <scope>NUCLEOTIDE SEQUENCE [LARGE SCALE GENOMIC DNA]</scope>
    <source>
        <strain>Pm70</strain>
    </source>
</reference>
<keyword id="KW-0238">DNA-binding</keyword>
<keyword id="KW-1185">Reference proteome</keyword>
<gene>
    <name type="primary">ssb</name>
    <name type="ordered locus">PM1950</name>
</gene>
<evidence type="ECO:0000255" key="1">
    <source>
        <dbReference type="HAMAP-Rule" id="MF_00984"/>
    </source>
</evidence>
<evidence type="ECO:0000256" key="2">
    <source>
        <dbReference type="SAM" id="MobiDB-lite"/>
    </source>
</evidence>
<name>SSB_PASMU</name>
<protein>
    <recommendedName>
        <fullName evidence="1">Single-stranded DNA-binding protein</fullName>
        <shortName evidence="1">SSB</shortName>
    </recommendedName>
</protein>
<feature type="chain" id="PRO_0000096075" description="Single-stranded DNA-binding protein">
    <location>
        <begin position="1"/>
        <end position="166"/>
    </location>
</feature>
<feature type="domain" description="SSB" evidence="1">
    <location>
        <begin position="4"/>
        <end position="109"/>
    </location>
</feature>
<feature type="region of interest" description="Disordered" evidence="2">
    <location>
        <begin position="114"/>
        <end position="166"/>
    </location>
</feature>
<feature type="compositionally biased region" description="Polar residues" evidence="2">
    <location>
        <begin position="125"/>
        <end position="138"/>
    </location>
</feature>
<accession>Q9CJP4</accession>
<sequence length="166" mass="18688">MAGVNKVIIVGNLGNDPEIRTMPNGEAVANISVATSESWIDKNTNERREVTEWHRIVFYRRQAEVAGEYLRKGSKVYVEGRLKTRKWQDQNGQDRYTTEIQGDVLQMLDSRNERQQTGGYAPQTAAPQYNAPTGSYGAQPSRPATKPAPQNEPPMDMGFEEDNIPF</sequence>